<name>MDTI_YERPG</name>
<feature type="chain" id="PRO_1000197326" description="Spermidine export protein MdtI">
    <location>
        <begin position="1"/>
        <end position="109"/>
    </location>
</feature>
<feature type="transmembrane region" description="Helical" evidence="1">
    <location>
        <begin position="6"/>
        <end position="26"/>
    </location>
</feature>
<feature type="transmembrane region" description="Helical" evidence="1">
    <location>
        <begin position="36"/>
        <end position="56"/>
    </location>
</feature>
<feature type="transmembrane region" description="Helical" evidence="1">
    <location>
        <begin position="64"/>
        <end position="84"/>
    </location>
</feature>
<feature type="transmembrane region" description="Helical" evidence="1">
    <location>
        <begin position="88"/>
        <end position="108"/>
    </location>
</feature>
<evidence type="ECO:0000255" key="1">
    <source>
        <dbReference type="HAMAP-Rule" id="MF_01597"/>
    </source>
</evidence>
<accession>A9QYW1</accession>
<keyword id="KW-0997">Cell inner membrane</keyword>
<keyword id="KW-1003">Cell membrane</keyword>
<keyword id="KW-0472">Membrane</keyword>
<keyword id="KW-0812">Transmembrane</keyword>
<keyword id="KW-1133">Transmembrane helix</keyword>
<keyword id="KW-0813">Transport</keyword>
<proteinExistence type="inferred from homology"/>
<organism>
    <name type="scientific">Yersinia pestis bv. Antiqua (strain Angola)</name>
    <dbReference type="NCBI Taxonomy" id="349746"/>
    <lineage>
        <taxon>Bacteria</taxon>
        <taxon>Pseudomonadati</taxon>
        <taxon>Pseudomonadota</taxon>
        <taxon>Gammaproteobacteria</taxon>
        <taxon>Enterobacterales</taxon>
        <taxon>Yersiniaceae</taxon>
        <taxon>Yersinia</taxon>
    </lineage>
</organism>
<dbReference type="EMBL" id="CP000901">
    <property type="protein sequence ID" value="ABX86683.1"/>
    <property type="molecule type" value="Genomic_DNA"/>
</dbReference>
<dbReference type="RefSeq" id="WP_002211187.1">
    <property type="nucleotide sequence ID" value="NZ_CP009935.1"/>
</dbReference>
<dbReference type="SMR" id="A9QYW1"/>
<dbReference type="GeneID" id="57976592"/>
<dbReference type="KEGG" id="ypg:YpAngola_A2408"/>
<dbReference type="PATRIC" id="fig|349746.12.peg.3424"/>
<dbReference type="GO" id="GO:0005886">
    <property type="term" value="C:plasma membrane"/>
    <property type="evidence" value="ECO:0007669"/>
    <property type="project" value="UniProtKB-SubCell"/>
</dbReference>
<dbReference type="GO" id="GO:0015199">
    <property type="term" value="F:amino-acid betaine transmembrane transporter activity"/>
    <property type="evidence" value="ECO:0007669"/>
    <property type="project" value="TreeGrafter"/>
</dbReference>
<dbReference type="GO" id="GO:0015297">
    <property type="term" value="F:antiporter activity"/>
    <property type="evidence" value="ECO:0007669"/>
    <property type="project" value="TreeGrafter"/>
</dbReference>
<dbReference type="GO" id="GO:0015220">
    <property type="term" value="F:choline transmembrane transporter activity"/>
    <property type="evidence" value="ECO:0007669"/>
    <property type="project" value="TreeGrafter"/>
</dbReference>
<dbReference type="GO" id="GO:0015606">
    <property type="term" value="F:spermidine transmembrane transporter activity"/>
    <property type="evidence" value="ECO:0007669"/>
    <property type="project" value="UniProtKB-UniRule"/>
</dbReference>
<dbReference type="GO" id="GO:0031460">
    <property type="term" value="P:glycine betaine transport"/>
    <property type="evidence" value="ECO:0007669"/>
    <property type="project" value="TreeGrafter"/>
</dbReference>
<dbReference type="FunFam" id="1.10.3730.20:FF:000001">
    <property type="entry name" value="Quaternary ammonium compound resistance transporter SugE"/>
    <property type="match status" value="1"/>
</dbReference>
<dbReference type="Gene3D" id="1.10.3730.20">
    <property type="match status" value="1"/>
</dbReference>
<dbReference type="HAMAP" id="MF_01597">
    <property type="entry name" value="MdtI"/>
    <property type="match status" value="1"/>
</dbReference>
<dbReference type="InterPro" id="IPR000390">
    <property type="entry name" value="Small_drug/metabolite_transptr"/>
</dbReference>
<dbReference type="InterPro" id="IPR045324">
    <property type="entry name" value="Small_multidrug_res"/>
</dbReference>
<dbReference type="InterPro" id="IPR023737">
    <property type="entry name" value="Spermidine_export_MdtI"/>
</dbReference>
<dbReference type="NCBIfam" id="NF007934">
    <property type="entry name" value="PRK10650.1"/>
    <property type="match status" value="1"/>
</dbReference>
<dbReference type="PANTHER" id="PTHR30561">
    <property type="entry name" value="SMR FAMILY PROTON-DEPENDENT DRUG EFFLUX TRANSPORTER SUGE"/>
    <property type="match status" value="1"/>
</dbReference>
<dbReference type="PANTHER" id="PTHR30561:SF6">
    <property type="entry name" value="SPERMIDINE EXPORT PROTEIN MDTI"/>
    <property type="match status" value="1"/>
</dbReference>
<dbReference type="Pfam" id="PF00893">
    <property type="entry name" value="Multi_Drug_Res"/>
    <property type="match status" value="1"/>
</dbReference>
<dbReference type="SUPFAM" id="SSF103481">
    <property type="entry name" value="Multidrug resistance efflux transporter EmrE"/>
    <property type="match status" value="1"/>
</dbReference>
<comment type="function">
    <text evidence="1">Catalyzes the excretion of spermidine.</text>
</comment>
<comment type="subunit">
    <text evidence="1">Forms a complex with MdtJ.</text>
</comment>
<comment type="subcellular location">
    <subcellularLocation>
        <location evidence="1">Cell inner membrane</location>
        <topology evidence="1">Multi-pass membrane protein</topology>
    </subcellularLocation>
</comment>
<comment type="similarity">
    <text evidence="1">Belongs to the drug/metabolite transporter (DMT) superfamily. Small multidrug resistance (SMR) (TC 2.A.7.1) family. MdtI subfamily.</text>
</comment>
<sequence>MQQLEFYPIAFLILAVMLEIVANILLKMSDGFRRKWLGILSLLSVLGAFSALAQAVKGIELSVAYALWGGFGIAATVAAGWILFNQRLNYKGWIGLILLLAGMVMIKLS</sequence>
<reference key="1">
    <citation type="journal article" date="2010" name="J. Bacteriol.">
        <title>Genome sequence of the deep-rooted Yersinia pestis strain Angola reveals new insights into the evolution and pangenome of the plague bacterium.</title>
        <authorList>
            <person name="Eppinger M."/>
            <person name="Worsham P.L."/>
            <person name="Nikolich M.P."/>
            <person name="Riley D.R."/>
            <person name="Sebastian Y."/>
            <person name="Mou S."/>
            <person name="Achtman M."/>
            <person name="Lindler L.E."/>
            <person name="Ravel J."/>
        </authorList>
    </citation>
    <scope>NUCLEOTIDE SEQUENCE [LARGE SCALE GENOMIC DNA]</scope>
    <source>
        <strain>Angola</strain>
    </source>
</reference>
<gene>
    <name evidence="1" type="primary">mdtI</name>
    <name type="ordered locus">YpAngola_A2408</name>
</gene>
<protein>
    <recommendedName>
        <fullName evidence="1">Spermidine export protein MdtI</fullName>
    </recommendedName>
</protein>